<organism>
    <name type="scientific">Pseudomonas syringae pv. syringae (strain B728a)</name>
    <dbReference type="NCBI Taxonomy" id="205918"/>
    <lineage>
        <taxon>Bacteria</taxon>
        <taxon>Pseudomonadati</taxon>
        <taxon>Pseudomonadota</taxon>
        <taxon>Gammaproteobacteria</taxon>
        <taxon>Pseudomonadales</taxon>
        <taxon>Pseudomonadaceae</taxon>
        <taxon>Pseudomonas</taxon>
        <taxon>Pseudomonas syringae</taxon>
    </lineage>
</organism>
<name>MNMG_PSEU2</name>
<gene>
    <name evidence="1" type="primary">mnmG</name>
    <name evidence="1" type="synonym">gidA</name>
    <name type="ordered locus">Psyr_5132</name>
</gene>
<proteinExistence type="inferred from homology"/>
<comment type="function">
    <text evidence="1">NAD-binding protein involved in the addition of a carboxymethylaminomethyl (cmnm) group at the wobble position (U34) of certain tRNAs, forming tRNA-cmnm(5)s(2)U34.</text>
</comment>
<comment type="cofactor">
    <cofactor evidence="1">
        <name>FAD</name>
        <dbReference type="ChEBI" id="CHEBI:57692"/>
    </cofactor>
</comment>
<comment type="subunit">
    <text evidence="1">Homodimer. Heterotetramer of two MnmE and two MnmG subunits.</text>
</comment>
<comment type="subcellular location">
    <subcellularLocation>
        <location evidence="1">Cytoplasm</location>
    </subcellularLocation>
</comment>
<comment type="similarity">
    <text evidence="1">Belongs to the MnmG family.</text>
</comment>
<comment type="sequence caution" evidence="2">
    <conflict type="erroneous initiation">
        <sequence resource="EMBL-CDS" id="AAY40159"/>
    </conflict>
</comment>
<dbReference type="EMBL" id="AF302083">
    <property type="protein sequence ID" value="AAG22815.1"/>
    <property type="molecule type" value="Genomic_DNA"/>
</dbReference>
<dbReference type="EMBL" id="CP000075">
    <property type="protein sequence ID" value="AAY40159.1"/>
    <property type="status" value="ALT_INIT"/>
    <property type="molecule type" value="Genomic_DNA"/>
</dbReference>
<dbReference type="RefSeq" id="YP_238197.1">
    <property type="nucleotide sequence ID" value="NC_007005.1"/>
</dbReference>
<dbReference type="SMR" id="Q9F5X1"/>
<dbReference type="STRING" id="205918.Psyr_5132"/>
<dbReference type="KEGG" id="psb:Psyr_5132"/>
<dbReference type="PATRIC" id="fig|205918.7.peg.5293"/>
<dbReference type="eggNOG" id="COG0445">
    <property type="taxonomic scope" value="Bacteria"/>
</dbReference>
<dbReference type="HOGENOM" id="CLU_007831_2_2_6"/>
<dbReference type="OrthoDB" id="9815560at2"/>
<dbReference type="Proteomes" id="UP000000426">
    <property type="component" value="Chromosome"/>
</dbReference>
<dbReference type="GO" id="GO:0005829">
    <property type="term" value="C:cytosol"/>
    <property type="evidence" value="ECO:0007669"/>
    <property type="project" value="TreeGrafter"/>
</dbReference>
<dbReference type="GO" id="GO:0050660">
    <property type="term" value="F:flavin adenine dinucleotide binding"/>
    <property type="evidence" value="ECO:0007669"/>
    <property type="project" value="UniProtKB-UniRule"/>
</dbReference>
<dbReference type="GO" id="GO:0030488">
    <property type="term" value="P:tRNA methylation"/>
    <property type="evidence" value="ECO:0007669"/>
    <property type="project" value="TreeGrafter"/>
</dbReference>
<dbReference type="GO" id="GO:0002098">
    <property type="term" value="P:tRNA wobble uridine modification"/>
    <property type="evidence" value="ECO:0007669"/>
    <property type="project" value="InterPro"/>
</dbReference>
<dbReference type="FunFam" id="1.10.10.1800:FF:000001">
    <property type="entry name" value="tRNA uridine 5-carboxymethylaminomethyl modification enzyme MnmG"/>
    <property type="match status" value="1"/>
</dbReference>
<dbReference type="FunFam" id="1.10.150.570:FF:000001">
    <property type="entry name" value="tRNA uridine 5-carboxymethylaminomethyl modification enzyme MnmG"/>
    <property type="match status" value="1"/>
</dbReference>
<dbReference type="FunFam" id="3.50.50.60:FF:000002">
    <property type="entry name" value="tRNA uridine 5-carboxymethylaminomethyl modification enzyme MnmG"/>
    <property type="match status" value="1"/>
</dbReference>
<dbReference type="FunFam" id="3.50.50.60:FF:000010">
    <property type="entry name" value="tRNA uridine 5-carboxymethylaminomethyl modification enzyme MnmG"/>
    <property type="match status" value="1"/>
</dbReference>
<dbReference type="Gene3D" id="3.50.50.60">
    <property type="entry name" value="FAD/NAD(P)-binding domain"/>
    <property type="match status" value="2"/>
</dbReference>
<dbReference type="Gene3D" id="1.10.150.570">
    <property type="entry name" value="GidA associated domain, C-terminal subdomain"/>
    <property type="match status" value="1"/>
</dbReference>
<dbReference type="Gene3D" id="1.10.10.1800">
    <property type="entry name" value="tRNA uridine 5-carboxymethylaminomethyl modification enzyme MnmG/GidA"/>
    <property type="match status" value="1"/>
</dbReference>
<dbReference type="HAMAP" id="MF_00129">
    <property type="entry name" value="MnmG_GidA"/>
    <property type="match status" value="1"/>
</dbReference>
<dbReference type="InterPro" id="IPR036188">
    <property type="entry name" value="FAD/NAD-bd_sf"/>
</dbReference>
<dbReference type="InterPro" id="IPR049312">
    <property type="entry name" value="GIDA_C_N"/>
</dbReference>
<dbReference type="InterPro" id="IPR004416">
    <property type="entry name" value="MnmG"/>
</dbReference>
<dbReference type="InterPro" id="IPR002218">
    <property type="entry name" value="MnmG-rel"/>
</dbReference>
<dbReference type="InterPro" id="IPR020595">
    <property type="entry name" value="MnmG-rel_CS"/>
</dbReference>
<dbReference type="InterPro" id="IPR026904">
    <property type="entry name" value="MnmG_C"/>
</dbReference>
<dbReference type="InterPro" id="IPR047001">
    <property type="entry name" value="MnmG_C_subdom"/>
</dbReference>
<dbReference type="InterPro" id="IPR044920">
    <property type="entry name" value="MnmG_C_subdom_sf"/>
</dbReference>
<dbReference type="InterPro" id="IPR040131">
    <property type="entry name" value="MnmG_N"/>
</dbReference>
<dbReference type="NCBIfam" id="TIGR00136">
    <property type="entry name" value="mnmG_gidA"/>
    <property type="match status" value="1"/>
</dbReference>
<dbReference type="PANTHER" id="PTHR11806">
    <property type="entry name" value="GLUCOSE INHIBITED DIVISION PROTEIN A"/>
    <property type="match status" value="1"/>
</dbReference>
<dbReference type="PANTHER" id="PTHR11806:SF0">
    <property type="entry name" value="PROTEIN MTO1 HOMOLOG, MITOCHONDRIAL"/>
    <property type="match status" value="1"/>
</dbReference>
<dbReference type="Pfam" id="PF01134">
    <property type="entry name" value="GIDA"/>
    <property type="match status" value="1"/>
</dbReference>
<dbReference type="Pfam" id="PF21680">
    <property type="entry name" value="GIDA_C_1st"/>
    <property type="match status" value="1"/>
</dbReference>
<dbReference type="Pfam" id="PF13932">
    <property type="entry name" value="SAM_GIDA_C"/>
    <property type="match status" value="1"/>
</dbReference>
<dbReference type="SMART" id="SM01228">
    <property type="entry name" value="GIDA_assoc_3"/>
    <property type="match status" value="1"/>
</dbReference>
<dbReference type="SUPFAM" id="SSF51905">
    <property type="entry name" value="FAD/NAD(P)-binding domain"/>
    <property type="match status" value="1"/>
</dbReference>
<dbReference type="PROSITE" id="PS01280">
    <property type="entry name" value="GIDA_1"/>
    <property type="match status" value="1"/>
</dbReference>
<dbReference type="PROSITE" id="PS01281">
    <property type="entry name" value="GIDA_2"/>
    <property type="match status" value="1"/>
</dbReference>
<keyword id="KW-0963">Cytoplasm</keyword>
<keyword id="KW-0274">FAD</keyword>
<keyword id="KW-0285">Flavoprotein</keyword>
<keyword id="KW-0520">NAD</keyword>
<keyword id="KW-0819">tRNA processing</keyword>
<feature type="chain" id="PRO_0000117157" description="tRNA uridine 5-carboxymethylaminomethyl modification enzyme MnmG">
    <location>
        <begin position="1"/>
        <end position="631"/>
    </location>
</feature>
<feature type="binding site" evidence="1">
    <location>
        <begin position="14"/>
        <end position="19"/>
    </location>
    <ligand>
        <name>FAD</name>
        <dbReference type="ChEBI" id="CHEBI:57692"/>
    </ligand>
</feature>
<feature type="binding site" evidence="1">
    <location>
        <begin position="274"/>
        <end position="288"/>
    </location>
    <ligand>
        <name>NAD(+)</name>
        <dbReference type="ChEBI" id="CHEBI:57540"/>
    </ligand>
</feature>
<accession>Q9F5X1</accession>
<accession>Q4ZL13</accession>
<evidence type="ECO:0000255" key="1">
    <source>
        <dbReference type="HAMAP-Rule" id="MF_00129"/>
    </source>
</evidence>
<evidence type="ECO:0000305" key="2"/>
<protein>
    <recommendedName>
        <fullName evidence="1">tRNA uridine 5-carboxymethylaminomethyl modification enzyme MnmG</fullName>
    </recommendedName>
    <alternativeName>
        <fullName evidence="1">Glucose-inhibited division protein A</fullName>
    </alternativeName>
</protein>
<sequence length="631" mass="69402">MVDFPSRFEVIVIGGGHAGTEAALASARMGVKTLLLTHNVETLGQMSCNPAIGGIGKSHLVKEIDALGGAMAMATDKGGIQFRVLNSRKGPAVRATRAQADRVLYKAAIRETLENQPNLWIFQQACDDLIVDQDQVRGVVTQMGMRIFADSVVLTTGTFLGGLIHIGMQNYSGGRAGDPPSIALAQRLRELPLRVGRLKTGTPPRIDGRSVDFSVMTEQPGDTPIPVMSFLGNKEQHPPQVSCWITHTNARTHEIIASNLDRSPMYSGVIEGIGPRYCPSIEDKIHRFADKESHQVFIEPEGLTTHELYPNGISTSLPFDVQLQIVRSIRGMENAHIVRPGYAIEYDYFDPRDLKYSLETKVIGGLFFAGQINGTTGYEEAGAQGLLAGTNAALRAQGRDSWCPRRDEAYIGVLVDDLITLGTQEPYRMFTSRAEYRLILREDNADLRLTEKGRELGLVDDARWAAFCIKRESIELEEQRLKSTWVRPGTEQGDAIAAHFGTPLTHEYNLLNLLTRPEIDYASLISITGQGCTDPQVAEQVEIKTKYAGYIDRQQDEIARLRASEDTRLPEDIDYAAISGLSKEIQSKLGITRPETLGQASRIPGVTPAAISLLMIHLKKRGAGRQLEQSA</sequence>
<reference key="1">
    <citation type="submission" date="2000-08" db="EMBL/GenBank/DDBJ databases">
        <title>Global regulatory effects associated with gidA mutations in Pseudomonas syringae.</title>
        <authorList>
            <person name="Kinscherf T.G."/>
            <person name="Willis D.K."/>
        </authorList>
    </citation>
    <scope>NUCLEOTIDE SEQUENCE [GENOMIC DNA]</scope>
</reference>
<reference key="2">
    <citation type="journal article" date="2005" name="Proc. Natl. Acad. Sci. U.S.A.">
        <title>Comparison of the complete genome sequences of Pseudomonas syringae pv. syringae B728a and pv. tomato DC3000.</title>
        <authorList>
            <person name="Feil H."/>
            <person name="Feil W.S."/>
            <person name="Chain P."/>
            <person name="Larimer F."/>
            <person name="Dibartolo G."/>
            <person name="Copeland A."/>
            <person name="Lykidis A."/>
            <person name="Trong S."/>
            <person name="Nolan M."/>
            <person name="Goltsman E."/>
            <person name="Thiel J."/>
            <person name="Malfatti S."/>
            <person name="Loper J.E."/>
            <person name="Lapidus A."/>
            <person name="Detter J.C."/>
            <person name="Land M."/>
            <person name="Richardson P.M."/>
            <person name="Kyrpides N.C."/>
            <person name="Ivanova N."/>
            <person name="Lindow S.E."/>
        </authorList>
    </citation>
    <scope>NUCLEOTIDE SEQUENCE [LARGE SCALE GENOMIC DNA]</scope>
    <source>
        <strain>B728a</strain>
    </source>
</reference>